<gene>
    <name evidence="1" type="primary">nuoB</name>
    <name type="ordered locus">PSPPH_3110</name>
</gene>
<proteinExistence type="inferred from homology"/>
<dbReference type="EC" id="7.1.1.-" evidence="1"/>
<dbReference type="EMBL" id="CP000058">
    <property type="protein sequence ID" value="AAZ37379.1"/>
    <property type="molecule type" value="Genomic_DNA"/>
</dbReference>
<dbReference type="RefSeq" id="WP_002554012.1">
    <property type="nucleotide sequence ID" value="NC_005773.3"/>
</dbReference>
<dbReference type="SMR" id="Q48H53"/>
<dbReference type="KEGG" id="psp:PSPPH_3110"/>
<dbReference type="eggNOG" id="COG0377">
    <property type="taxonomic scope" value="Bacteria"/>
</dbReference>
<dbReference type="HOGENOM" id="CLU_055737_7_3_6"/>
<dbReference type="Proteomes" id="UP000000551">
    <property type="component" value="Chromosome"/>
</dbReference>
<dbReference type="GO" id="GO:0005886">
    <property type="term" value="C:plasma membrane"/>
    <property type="evidence" value="ECO:0007669"/>
    <property type="project" value="UniProtKB-SubCell"/>
</dbReference>
<dbReference type="GO" id="GO:0045271">
    <property type="term" value="C:respiratory chain complex I"/>
    <property type="evidence" value="ECO:0007669"/>
    <property type="project" value="TreeGrafter"/>
</dbReference>
<dbReference type="GO" id="GO:0051539">
    <property type="term" value="F:4 iron, 4 sulfur cluster binding"/>
    <property type="evidence" value="ECO:0007669"/>
    <property type="project" value="UniProtKB-KW"/>
</dbReference>
<dbReference type="GO" id="GO:0005506">
    <property type="term" value="F:iron ion binding"/>
    <property type="evidence" value="ECO:0007669"/>
    <property type="project" value="UniProtKB-UniRule"/>
</dbReference>
<dbReference type="GO" id="GO:0008137">
    <property type="term" value="F:NADH dehydrogenase (ubiquinone) activity"/>
    <property type="evidence" value="ECO:0007669"/>
    <property type="project" value="InterPro"/>
</dbReference>
<dbReference type="GO" id="GO:0050136">
    <property type="term" value="F:NADH:ubiquinone reductase (non-electrogenic) activity"/>
    <property type="evidence" value="ECO:0007669"/>
    <property type="project" value="UniProtKB-UniRule"/>
</dbReference>
<dbReference type="GO" id="GO:0048038">
    <property type="term" value="F:quinone binding"/>
    <property type="evidence" value="ECO:0007669"/>
    <property type="project" value="UniProtKB-KW"/>
</dbReference>
<dbReference type="GO" id="GO:0009060">
    <property type="term" value="P:aerobic respiration"/>
    <property type="evidence" value="ECO:0007669"/>
    <property type="project" value="TreeGrafter"/>
</dbReference>
<dbReference type="GO" id="GO:0015990">
    <property type="term" value="P:electron transport coupled proton transport"/>
    <property type="evidence" value="ECO:0007669"/>
    <property type="project" value="TreeGrafter"/>
</dbReference>
<dbReference type="FunFam" id="3.40.50.12280:FF:000002">
    <property type="entry name" value="NADH-quinone oxidoreductase subunit B"/>
    <property type="match status" value="1"/>
</dbReference>
<dbReference type="Gene3D" id="3.40.50.12280">
    <property type="match status" value="1"/>
</dbReference>
<dbReference type="HAMAP" id="MF_01356">
    <property type="entry name" value="NDH1_NuoB"/>
    <property type="match status" value="1"/>
</dbReference>
<dbReference type="InterPro" id="IPR006137">
    <property type="entry name" value="NADH_UbQ_OxRdtase-like_20kDa"/>
</dbReference>
<dbReference type="InterPro" id="IPR006138">
    <property type="entry name" value="NADH_UQ_OxRdtase_20Kd_su"/>
</dbReference>
<dbReference type="NCBIfam" id="TIGR01957">
    <property type="entry name" value="nuoB_fam"/>
    <property type="match status" value="1"/>
</dbReference>
<dbReference type="NCBIfam" id="NF005012">
    <property type="entry name" value="PRK06411.1"/>
    <property type="match status" value="1"/>
</dbReference>
<dbReference type="PANTHER" id="PTHR11995">
    <property type="entry name" value="NADH DEHYDROGENASE"/>
    <property type="match status" value="1"/>
</dbReference>
<dbReference type="PANTHER" id="PTHR11995:SF14">
    <property type="entry name" value="NADH DEHYDROGENASE [UBIQUINONE] IRON-SULFUR PROTEIN 7, MITOCHONDRIAL"/>
    <property type="match status" value="1"/>
</dbReference>
<dbReference type="Pfam" id="PF01058">
    <property type="entry name" value="Oxidored_q6"/>
    <property type="match status" value="1"/>
</dbReference>
<dbReference type="SUPFAM" id="SSF56770">
    <property type="entry name" value="HydA/Nqo6-like"/>
    <property type="match status" value="1"/>
</dbReference>
<dbReference type="PROSITE" id="PS01150">
    <property type="entry name" value="COMPLEX1_20K"/>
    <property type="match status" value="1"/>
</dbReference>
<evidence type="ECO:0000255" key="1">
    <source>
        <dbReference type="HAMAP-Rule" id="MF_01356"/>
    </source>
</evidence>
<evidence type="ECO:0000256" key="2">
    <source>
        <dbReference type="SAM" id="MobiDB-lite"/>
    </source>
</evidence>
<organism>
    <name type="scientific">Pseudomonas savastanoi pv. phaseolicola (strain 1448A / Race 6)</name>
    <name type="common">Pseudomonas syringae pv. phaseolicola (strain 1448A / Race 6)</name>
    <dbReference type="NCBI Taxonomy" id="264730"/>
    <lineage>
        <taxon>Bacteria</taxon>
        <taxon>Pseudomonadati</taxon>
        <taxon>Pseudomonadota</taxon>
        <taxon>Gammaproteobacteria</taxon>
        <taxon>Pseudomonadales</taxon>
        <taxon>Pseudomonadaceae</taxon>
        <taxon>Pseudomonas</taxon>
    </lineage>
</organism>
<keyword id="KW-0004">4Fe-4S</keyword>
<keyword id="KW-0997">Cell inner membrane</keyword>
<keyword id="KW-1003">Cell membrane</keyword>
<keyword id="KW-0408">Iron</keyword>
<keyword id="KW-0411">Iron-sulfur</keyword>
<keyword id="KW-0472">Membrane</keyword>
<keyword id="KW-0479">Metal-binding</keyword>
<keyword id="KW-0520">NAD</keyword>
<keyword id="KW-0874">Quinone</keyword>
<keyword id="KW-1278">Translocase</keyword>
<keyword id="KW-0813">Transport</keyword>
<keyword id="KW-0830">Ubiquinone</keyword>
<accession>Q48H53</accession>
<reference key="1">
    <citation type="journal article" date="2005" name="J. Bacteriol.">
        <title>Whole-genome sequence analysis of Pseudomonas syringae pv. phaseolicola 1448A reveals divergence among pathovars in genes involved in virulence and transposition.</title>
        <authorList>
            <person name="Joardar V."/>
            <person name="Lindeberg M."/>
            <person name="Jackson R.W."/>
            <person name="Selengut J."/>
            <person name="Dodson R."/>
            <person name="Brinkac L.M."/>
            <person name="Daugherty S.C."/>
            <person name="DeBoy R.T."/>
            <person name="Durkin A.S."/>
            <person name="Gwinn Giglio M."/>
            <person name="Madupu R."/>
            <person name="Nelson W.C."/>
            <person name="Rosovitz M.J."/>
            <person name="Sullivan S.A."/>
            <person name="Crabtree J."/>
            <person name="Creasy T."/>
            <person name="Davidsen T.M."/>
            <person name="Haft D.H."/>
            <person name="Zafar N."/>
            <person name="Zhou L."/>
            <person name="Halpin R."/>
            <person name="Holley T."/>
            <person name="Khouri H.M."/>
            <person name="Feldblyum T.V."/>
            <person name="White O."/>
            <person name="Fraser C.M."/>
            <person name="Chatterjee A.K."/>
            <person name="Cartinhour S."/>
            <person name="Schneider D."/>
            <person name="Mansfield J.W."/>
            <person name="Collmer A."/>
            <person name="Buell R."/>
        </authorList>
    </citation>
    <scope>NUCLEOTIDE SEQUENCE [LARGE SCALE GENOMIC DNA]</scope>
    <source>
        <strain>1448A / Race 6</strain>
    </source>
</reference>
<protein>
    <recommendedName>
        <fullName evidence="1">NADH-quinone oxidoreductase subunit B</fullName>
        <ecNumber evidence="1">7.1.1.-</ecNumber>
    </recommendedName>
    <alternativeName>
        <fullName evidence="1">NADH dehydrogenase I subunit B</fullName>
    </alternativeName>
    <alternativeName>
        <fullName evidence="1">NDH-1 subunit B</fullName>
    </alternativeName>
</protein>
<feature type="chain" id="PRO_0000376318" description="NADH-quinone oxidoreductase subunit B">
    <location>
        <begin position="1"/>
        <end position="224"/>
    </location>
</feature>
<feature type="region of interest" description="Disordered" evidence="2">
    <location>
        <begin position="201"/>
        <end position="224"/>
    </location>
</feature>
<feature type="compositionally biased region" description="Basic and acidic residues" evidence="2">
    <location>
        <begin position="203"/>
        <end position="212"/>
    </location>
</feature>
<feature type="compositionally biased region" description="Polar residues" evidence="2">
    <location>
        <begin position="213"/>
        <end position="224"/>
    </location>
</feature>
<feature type="binding site" evidence="1">
    <location>
        <position position="67"/>
    </location>
    <ligand>
        <name>[4Fe-4S] cluster</name>
        <dbReference type="ChEBI" id="CHEBI:49883"/>
    </ligand>
</feature>
<feature type="binding site" evidence="1">
    <location>
        <position position="68"/>
    </location>
    <ligand>
        <name>[4Fe-4S] cluster</name>
        <dbReference type="ChEBI" id="CHEBI:49883"/>
    </ligand>
</feature>
<feature type="binding site" evidence="1">
    <location>
        <position position="133"/>
    </location>
    <ligand>
        <name>[4Fe-4S] cluster</name>
        <dbReference type="ChEBI" id="CHEBI:49883"/>
    </ligand>
</feature>
<feature type="binding site" evidence="1">
    <location>
        <position position="162"/>
    </location>
    <ligand>
        <name>[4Fe-4S] cluster</name>
        <dbReference type="ChEBI" id="CHEBI:49883"/>
    </ligand>
</feature>
<comment type="function">
    <text evidence="1">NDH-1 shuttles electrons from NADH, via FMN and iron-sulfur (Fe-S) centers, to quinones in the respiratory chain. The immediate electron acceptor for the enzyme in this species is believed to be ubiquinone. Couples the redox reaction to proton translocation (for every two electrons transferred, four hydrogen ions are translocated across the cytoplasmic membrane), and thus conserves the redox energy in a proton gradient.</text>
</comment>
<comment type="catalytic activity">
    <reaction evidence="1">
        <text>a quinone + NADH + 5 H(+)(in) = a quinol + NAD(+) + 4 H(+)(out)</text>
        <dbReference type="Rhea" id="RHEA:57888"/>
        <dbReference type="ChEBI" id="CHEBI:15378"/>
        <dbReference type="ChEBI" id="CHEBI:24646"/>
        <dbReference type="ChEBI" id="CHEBI:57540"/>
        <dbReference type="ChEBI" id="CHEBI:57945"/>
        <dbReference type="ChEBI" id="CHEBI:132124"/>
    </reaction>
</comment>
<comment type="cofactor">
    <cofactor evidence="1">
        <name>[4Fe-4S] cluster</name>
        <dbReference type="ChEBI" id="CHEBI:49883"/>
    </cofactor>
    <text evidence="1">Binds 1 [4Fe-4S] cluster.</text>
</comment>
<comment type="subunit">
    <text evidence="1">NDH-1 is composed of 13 different subunits. Subunits NuoB, CD, E, F, and G constitute the peripheral sector of the complex.</text>
</comment>
<comment type="subcellular location">
    <subcellularLocation>
        <location evidence="1">Cell inner membrane</location>
        <topology evidence="1">Peripheral membrane protein</topology>
        <orientation evidence="1">Cytoplasmic side</orientation>
    </subcellularLocation>
</comment>
<comment type="similarity">
    <text evidence="1">Belongs to the complex I 20 kDa subunit family.</text>
</comment>
<name>NUOB_PSE14</name>
<sequence>MQYNLTRIDPDAPNEQYPIGKRETVSDPLEDQVHKNIYMGKLEDVLNGAVNWGRKNSLWPYNFGLSCCYVEMTTAFTAPHDIARFGAEVIRASPRQADFMVIAGTCFIKMAPIIQRLYEQMLEPKWVISMGSCANSGGMYDIYSVVQGVDKFLPVDVYVPGCPPRPEAFLQGLMLLQESIGKERRPLSWVVGDQGVYRAEMPSQKEQRREQRIQVTNLRSPDEV</sequence>